<keyword id="KW-0067">ATP-binding</keyword>
<keyword id="KW-0963">Cytoplasm</keyword>
<keyword id="KW-0418">Kinase</keyword>
<keyword id="KW-0547">Nucleotide-binding</keyword>
<keyword id="KW-1185">Reference proteome</keyword>
<keyword id="KW-0808">Transferase</keyword>
<feature type="chain" id="PRO_0000170549" description="Guanylate kinase">
    <location>
        <begin position="1"/>
        <end position="210"/>
    </location>
</feature>
<feature type="domain" description="Guanylate kinase-like" evidence="1">
    <location>
        <begin position="8"/>
        <end position="188"/>
    </location>
</feature>
<feature type="binding site" evidence="1">
    <location>
        <begin position="15"/>
        <end position="22"/>
    </location>
    <ligand>
        <name>ATP</name>
        <dbReference type="ChEBI" id="CHEBI:30616"/>
    </ligand>
</feature>
<organism>
    <name type="scientific">Idiomarina loihiensis (strain ATCC BAA-735 / DSM 15497 / L2-TR)</name>
    <dbReference type="NCBI Taxonomy" id="283942"/>
    <lineage>
        <taxon>Bacteria</taxon>
        <taxon>Pseudomonadati</taxon>
        <taxon>Pseudomonadota</taxon>
        <taxon>Gammaproteobacteria</taxon>
        <taxon>Alteromonadales</taxon>
        <taxon>Idiomarinaceae</taxon>
        <taxon>Idiomarina</taxon>
    </lineage>
</organism>
<proteinExistence type="inferred from homology"/>
<evidence type="ECO:0000255" key="1">
    <source>
        <dbReference type="HAMAP-Rule" id="MF_00328"/>
    </source>
</evidence>
<name>KGUA_IDILO</name>
<sequence>MTASPVLGNLFIIAAPSGAGKSSLIRALLEKHPDQSMQVSVSSTTRAPRPGEVQGVHYHFLSTEEFEQRIDAGEFYEWARVFGNYYGTSRKVVESLLAEGKDVFLDIDWQGAQQVREHHPEVRSVFIVPPSLEILEERLRVRGQDSDEVIAERMAKAQAEMSHYHEFDYLLVNDDFNNSLASLEHIVLAQRQKMPHQQIRYSSVLKELLG</sequence>
<protein>
    <recommendedName>
        <fullName evidence="1">Guanylate kinase</fullName>
        <ecNumber evidence="1">2.7.4.8</ecNumber>
    </recommendedName>
    <alternativeName>
        <fullName evidence="1">GMP kinase</fullName>
    </alternativeName>
</protein>
<comment type="function">
    <text evidence="1">Essential for recycling GMP and indirectly, cGMP.</text>
</comment>
<comment type="catalytic activity">
    <reaction evidence="1">
        <text>GMP + ATP = GDP + ADP</text>
        <dbReference type="Rhea" id="RHEA:20780"/>
        <dbReference type="ChEBI" id="CHEBI:30616"/>
        <dbReference type="ChEBI" id="CHEBI:58115"/>
        <dbReference type="ChEBI" id="CHEBI:58189"/>
        <dbReference type="ChEBI" id="CHEBI:456216"/>
        <dbReference type="EC" id="2.7.4.8"/>
    </reaction>
</comment>
<comment type="subcellular location">
    <subcellularLocation>
        <location evidence="1">Cytoplasm</location>
    </subcellularLocation>
</comment>
<comment type="similarity">
    <text evidence="1">Belongs to the guanylate kinase family.</text>
</comment>
<gene>
    <name evidence="1" type="primary">gmk</name>
    <name type="ordered locus">IL2382</name>
</gene>
<accession>Q5QYH9</accession>
<reference key="1">
    <citation type="journal article" date="2004" name="Proc. Natl. Acad. Sci. U.S.A.">
        <title>Genome sequence of the deep-sea gamma-proteobacterium Idiomarina loihiensis reveals amino acid fermentation as a source of carbon and energy.</title>
        <authorList>
            <person name="Hou S."/>
            <person name="Saw J.H."/>
            <person name="Lee K.S."/>
            <person name="Freitas T.A."/>
            <person name="Belisle C."/>
            <person name="Kawarabayasi Y."/>
            <person name="Donachie S.P."/>
            <person name="Pikina A."/>
            <person name="Galperin M.Y."/>
            <person name="Koonin E.V."/>
            <person name="Makarova K.S."/>
            <person name="Omelchenko M.V."/>
            <person name="Sorokin A."/>
            <person name="Wolf Y.I."/>
            <person name="Li Q.X."/>
            <person name="Keum Y.S."/>
            <person name="Campbell S."/>
            <person name="Denery J."/>
            <person name="Aizawa S."/>
            <person name="Shibata S."/>
            <person name="Malahoff A."/>
            <person name="Alam M."/>
        </authorList>
    </citation>
    <scope>NUCLEOTIDE SEQUENCE [LARGE SCALE GENOMIC DNA]</scope>
    <source>
        <strain>ATCC BAA-735 / DSM 15497 / L2-TR</strain>
    </source>
</reference>
<dbReference type="EC" id="2.7.4.8" evidence="1"/>
<dbReference type="EMBL" id="AE017340">
    <property type="protein sequence ID" value="AAV83214.1"/>
    <property type="molecule type" value="Genomic_DNA"/>
</dbReference>
<dbReference type="RefSeq" id="WP_011235608.1">
    <property type="nucleotide sequence ID" value="NC_006512.1"/>
</dbReference>
<dbReference type="SMR" id="Q5QYH9"/>
<dbReference type="STRING" id="283942.IL2382"/>
<dbReference type="GeneID" id="41337577"/>
<dbReference type="KEGG" id="ilo:IL2382"/>
<dbReference type="eggNOG" id="COG0194">
    <property type="taxonomic scope" value="Bacteria"/>
</dbReference>
<dbReference type="HOGENOM" id="CLU_001715_1_2_6"/>
<dbReference type="OrthoDB" id="9808150at2"/>
<dbReference type="Proteomes" id="UP000001171">
    <property type="component" value="Chromosome"/>
</dbReference>
<dbReference type="GO" id="GO:0005829">
    <property type="term" value="C:cytosol"/>
    <property type="evidence" value="ECO:0007669"/>
    <property type="project" value="TreeGrafter"/>
</dbReference>
<dbReference type="GO" id="GO:0005524">
    <property type="term" value="F:ATP binding"/>
    <property type="evidence" value="ECO:0007669"/>
    <property type="project" value="UniProtKB-UniRule"/>
</dbReference>
<dbReference type="GO" id="GO:0004385">
    <property type="term" value="F:guanylate kinase activity"/>
    <property type="evidence" value="ECO:0007669"/>
    <property type="project" value="UniProtKB-UniRule"/>
</dbReference>
<dbReference type="CDD" id="cd00071">
    <property type="entry name" value="GMPK"/>
    <property type="match status" value="1"/>
</dbReference>
<dbReference type="FunFam" id="3.40.50.300:FF:000084">
    <property type="entry name" value="Guanylate kinase"/>
    <property type="match status" value="1"/>
</dbReference>
<dbReference type="FunFam" id="3.30.63.10:FF:000002">
    <property type="entry name" value="Guanylate kinase 1"/>
    <property type="match status" value="1"/>
</dbReference>
<dbReference type="Gene3D" id="3.30.63.10">
    <property type="entry name" value="Guanylate Kinase phosphate binding domain"/>
    <property type="match status" value="1"/>
</dbReference>
<dbReference type="Gene3D" id="3.40.50.300">
    <property type="entry name" value="P-loop containing nucleotide triphosphate hydrolases"/>
    <property type="match status" value="1"/>
</dbReference>
<dbReference type="HAMAP" id="MF_00328">
    <property type="entry name" value="Guanylate_kinase"/>
    <property type="match status" value="1"/>
</dbReference>
<dbReference type="InterPro" id="IPR008145">
    <property type="entry name" value="GK/Ca_channel_bsu"/>
</dbReference>
<dbReference type="InterPro" id="IPR008144">
    <property type="entry name" value="Guanylate_kin-like_dom"/>
</dbReference>
<dbReference type="InterPro" id="IPR017665">
    <property type="entry name" value="Guanylate_kinase"/>
</dbReference>
<dbReference type="InterPro" id="IPR020590">
    <property type="entry name" value="Guanylate_kinase_CS"/>
</dbReference>
<dbReference type="InterPro" id="IPR027417">
    <property type="entry name" value="P-loop_NTPase"/>
</dbReference>
<dbReference type="NCBIfam" id="TIGR03263">
    <property type="entry name" value="guanyl_kin"/>
    <property type="match status" value="1"/>
</dbReference>
<dbReference type="PANTHER" id="PTHR23117:SF13">
    <property type="entry name" value="GUANYLATE KINASE"/>
    <property type="match status" value="1"/>
</dbReference>
<dbReference type="PANTHER" id="PTHR23117">
    <property type="entry name" value="GUANYLATE KINASE-RELATED"/>
    <property type="match status" value="1"/>
</dbReference>
<dbReference type="Pfam" id="PF00625">
    <property type="entry name" value="Guanylate_kin"/>
    <property type="match status" value="1"/>
</dbReference>
<dbReference type="SMART" id="SM00072">
    <property type="entry name" value="GuKc"/>
    <property type="match status" value="1"/>
</dbReference>
<dbReference type="SUPFAM" id="SSF52540">
    <property type="entry name" value="P-loop containing nucleoside triphosphate hydrolases"/>
    <property type="match status" value="1"/>
</dbReference>
<dbReference type="PROSITE" id="PS00856">
    <property type="entry name" value="GUANYLATE_KINASE_1"/>
    <property type="match status" value="1"/>
</dbReference>
<dbReference type="PROSITE" id="PS50052">
    <property type="entry name" value="GUANYLATE_KINASE_2"/>
    <property type="match status" value="1"/>
</dbReference>